<evidence type="ECO:0000255" key="1">
    <source>
        <dbReference type="HAMAP-Rule" id="MF_01364"/>
    </source>
</evidence>
<evidence type="ECO:0000305" key="2"/>
<accession>B9DSW3</accession>
<organism>
    <name type="scientific">Streptococcus uberis (strain ATCC BAA-854 / 0140J)</name>
    <dbReference type="NCBI Taxonomy" id="218495"/>
    <lineage>
        <taxon>Bacteria</taxon>
        <taxon>Bacillati</taxon>
        <taxon>Bacillota</taxon>
        <taxon>Bacilli</taxon>
        <taxon>Lactobacillales</taxon>
        <taxon>Streptococcaceae</taxon>
        <taxon>Streptococcus</taxon>
    </lineage>
</organism>
<gene>
    <name evidence="1" type="primary">rpsZ</name>
    <name evidence="1" type="synonym">rpsN</name>
    <name type="ordered locus">SUB0081</name>
</gene>
<sequence length="61" mass="7073">MAKKSMIAKNKRPAKHSTQAYTRCEKCGRPHSVYRKFKLCRVCFRELAYKGQIPGVVKASW</sequence>
<comment type="function">
    <text evidence="1">Binds 16S rRNA, required for the assembly of 30S particles and may also be responsible for determining the conformation of the 16S rRNA at the A site.</text>
</comment>
<comment type="cofactor">
    <cofactor evidence="1">
        <name>Zn(2+)</name>
        <dbReference type="ChEBI" id="CHEBI:29105"/>
    </cofactor>
    <text evidence="1">Binds 1 zinc ion per subunit.</text>
</comment>
<comment type="subunit">
    <text evidence="1">Part of the 30S ribosomal subunit. Contacts proteins S3 and S10.</text>
</comment>
<comment type="similarity">
    <text evidence="1">Belongs to the universal ribosomal protein uS14 family. Zinc-binding uS14 subfamily.</text>
</comment>
<name>RS14Z_STRU0</name>
<proteinExistence type="inferred from homology"/>
<feature type="chain" id="PRO_1000166781" description="Small ribosomal subunit protein uS14">
    <location>
        <begin position="1"/>
        <end position="61"/>
    </location>
</feature>
<feature type="binding site" evidence="1">
    <location>
        <position position="24"/>
    </location>
    <ligand>
        <name>Zn(2+)</name>
        <dbReference type="ChEBI" id="CHEBI:29105"/>
    </ligand>
</feature>
<feature type="binding site" evidence="1">
    <location>
        <position position="27"/>
    </location>
    <ligand>
        <name>Zn(2+)</name>
        <dbReference type="ChEBI" id="CHEBI:29105"/>
    </ligand>
</feature>
<feature type="binding site" evidence="1">
    <location>
        <position position="40"/>
    </location>
    <ligand>
        <name>Zn(2+)</name>
        <dbReference type="ChEBI" id="CHEBI:29105"/>
    </ligand>
</feature>
<feature type="binding site" evidence="1">
    <location>
        <position position="43"/>
    </location>
    <ligand>
        <name>Zn(2+)</name>
        <dbReference type="ChEBI" id="CHEBI:29105"/>
    </ligand>
</feature>
<reference key="1">
    <citation type="journal article" date="2009" name="BMC Genomics">
        <title>Evidence for niche adaptation in the genome of the bovine pathogen Streptococcus uberis.</title>
        <authorList>
            <person name="Ward P.N."/>
            <person name="Holden M.T.G."/>
            <person name="Leigh J.A."/>
            <person name="Lennard N."/>
            <person name="Bignell A."/>
            <person name="Barron A."/>
            <person name="Clark L."/>
            <person name="Quail M.A."/>
            <person name="Woodward J."/>
            <person name="Barrell B.G."/>
            <person name="Egan S.A."/>
            <person name="Field T.R."/>
            <person name="Maskell D."/>
            <person name="Kehoe M."/>
            <person name="Dowson C.G."/>
            <person name="Chanter N."/>
            <person name="Whatmore A.M."/>
            <person name="Bentley S.D."/>
            <person name="Parkhill J."/>
        </authorList>
    </citation>
    <scope>NUCLEOTIDE SEQUENCE [LARGE SCALE GENOMIC DNA]</scope>
    <source>
        <strain>ATCC BAA-854 / 0140J</strain>
    </source>
</reference>
<dbReference type="EMBL" id="AM946015">
    <property type="protein sequence ID" value="CAR40461.1"/>
    <property type="molecule type" value="Genomic_DNA"/>
</dbReference>
<dbReference type="RefSeq" id="WP_002987746.1">
    <property type="nucleotide sequence ID" value="NC_012004.1"/>
</dbReference>
<dbReference type="SMR" id="B9DSW3"/>
<dbReference type="STRING" id="218495.SUB0081"/>
<dbReference type="KEGG" id="sub:SUB0081"/>
<dbReference type="eggNOG" id="COG0199">
    <property type="taxonomic scope" value="Bacteria"/>
</dbReference>
<dbReference type="HOGENOM" id="CLU_139869_3_0_9"/>
<dbReference type="OrthoDB" id="9810484at2"/>
<dbReference type="Proteomes" id="UP000000449">
    <property type="component" value="Chromosome"/>
</dbReference>
<dbReference type="GO" id="GO:0015935">
    <property type="term" value="C:small ribosomal subunit"/>
    <property type="evidence" value="ECO:0007669"/>
    <property type="project" value="TreeGrafter"/>
</dbReference>
<dbReference type="GO" id="GO:0019843">
    <property type="term" value="F:rRNA binding"/>
    <property type="evidence" value="ECO:0007669"/>
    <property type="project" value="UniProtKB-UniRule"/>
</dbReference>
<dbReference type="GO" id="GO:0003735">
    <property type="term" value="F:structural constituent of ribosome"/>
    <property type="evidence" value="ECO:0007669"/>
    <property type="project" value="InterPro"/>
</dbReference>
<dbReference type="GO" id="GO:0008270">
    <property type="term" value="F:zinc ion binding"/>
    <property type="evidence" value="ECO:0007669"/>
    <property type="project" value="UniProtKB-UniRule"/>
</dbReference>
<dbReference type="GO" id="GO:0006412">
    <property type="term" value="P:translation"/>
    <property type="evidence" value="ECO:0007669"/>
    <property type="project" value="UniProtKB-UniRule"/>
</dbReference>
<dbReference type="FunFam" id="4.10.830.10:FF:000001">
    <property type="entry name" value="30S ribosomal protein S14 type Z"/>
    <property type="match status" value="1"/>
</dbReference>
<dbReference type="Gene3D" id="4.10.830.10">
    <property type="entry name" value="30s Ribosomal Protein S14, Chain N"/>
    <property type="match status" value="1"/>
</dbReference>
<dbReference type="HAMAP" id="MF_01364_B">
    <property type="entry name" value="Ribosomal_uS14_2_B"/>
    <property type="match status" value="1"/>
</dbReference>
<dbReference type="InterPro" id="IPR001209">
    <property type="entry name" value="Ribosomal_uS14"/>
</dbReference>
<dbReference type="InterPro" id="IPR023053">
    <property type="entry name" value="Ribosomal_uS14_bact"/>
</dbReference>
<dbReference type="InterPro" id="IPR018271">
    <property type="entry name" value="Ribosomal_uS14_CS"/>
</dbReference>
<dbReference type="InterPro" id="IPR043140">
    <property type="entry name" value="Ribosomal_uS14_sf"/>
</dbReference>
<dbReference type="NCBIfam" id="NF005974">
    <property type="entry name" value="PRK08061.1"/>
    <property type="match status" value="1"/>
</dbReference>
<dbReference type="PANTHER" id="PTHR19836">
    <property type="entry name" value="30S RIBOSOMAL PROTEIN S14"/>
    <property type="match status" value="1"/>
</dbReference>
<dbReference type="PANTHER" id="PTHR19836:SF26">
    <property type="entry name" value="SMALL RIBOSOMAL SUBUNIT PROTEIN US14B"/>
    <property type="match status" value="1"/>
</dbReference>
<dbReference type="Pfam" id="PF00253">
    <property type="entry name" value="Ribosomal_S14"/>
    <property type="match status" value="1"/>
</dbReference>
<dbReference type="SUPFAM" id="SSF57716">
    <property type="entry name" value="Glucocorticoid receptor-like (DNA-binding domain)"/>
    <property type="match status" value="1"/>
</dbReference>
<dbReference type="PROSITE" id="PS00527">
    <property type="entry name" value="RIBOSOMAL_S14"/>
    <property type="match status" value="1"/>
</dbReference>
<keyword id="KW-0479">Metal-binding</keyword>
<keyword id="KW-1185">Reference proteome</keyword>
<keyword id="KW-0687">Ribonucleoprotein</keyword>
<keyword id="KW-0689">Ribosomal protein</keyword>
<keyword id="KW-0694">RNA-binding</keyword>
<keyword id="KW-0699">rRNA-binding</keyword>
<keyword id="KW-0862">Zinc</keyword>
<protein>
    <recommendedName>
        <fullName evidence="1">Small ribosomal subunit protein uS14</fullName>
    </recommendedName>
    <alternativeName>
        <fullName evidence="2">30S ribosomal protein S14 type Z</fullName>
    </alternativeName>
</protein>